<organism>
    <name type="scientific">Shigella flexneri</name>
    <dbReference type="NCBI Taxonomy" id="623"/>
    <lineage>
        <taxon>Bacteria</taxon>
        <taxon>Pseudomonadati</taxon>
        <taxon>Pseudomonadota</taxon>
        <taxon>Gammaproteobacteria</taxon>
        <taxon>Enterobacterales</taxon>
        <taxon>Enterobacteriaceae</taxon>
        <taxon>Shigella</taxon>
    </lineage>
</organism>
<proteinExistence type="inferred from homology"/>
<sequence length="266" mass="29395">MAKSLFRALVALSFLAPLWLNAAPRVITLSPANTELAFAAGITPVGVSSYSDYPPQAQKIEQVSTWQGMNLERIVALKPDLVIAWRGGNAERQVDQLASLGIKVMWVDATSIEQIANALRQLAPWSPQPDKAEQAAQSLLDQYVQLKAQYADKPKKRVFLQFGINPPFTSGKESIQNQVLEVCGGENIFKDSRVPWPQVSREQVLARSPQAIVITGGPDQIPKIKQYWGEQLKIPVIPLTSDWFERASPRIILAAQQLCNALSQVD</sequence>
<protein>
    <recommendedName>
        <fullName evidence="1">Vitamin B12-binding protein</fullName>
    </recommendedName>
</protein>
<accession>Q83MD7</accession>
<reference key="1">
    <citation type="journal article" date="2002" name="Nucleic Acids Res.">
        <title>Genome sequence of Shigella flexneri 2a: insights into pathogenicity through comparison with genomes of Escherichia coli K12 and O157.</title>
        <authorList>
            <person name="Jin Q."/>
            <person name="Yuan Z."/>
            <person name="Xu J."/>
            <person name="Wang Y."/>
            <person name="Shen Y."/>
            <person name="Lu W."/>
            <person name="Wang J."/>
            <person name="Liu H."/>
            <person name="Yang J."/>
            <person name="Yang F."/>
            <person name="Zhang X."/>
            <person name="Zhang J."/>
            <person name="Yang G."/>
            <person name="Wu H."/>
            <person name="Qu D."/>
            <person name="Dong J."/>
            <person name="Sun L."/>
            <person name="Xue Y."/>
            <person name="Zhao A."/>
            <person name="Gao Y."/>
            <person name="Zhu J."/>
            <person name="Kan B."/>
            <person name="Ding K."/>
            <person name="Chen S."/>
            <person name="Cheng H."/>
            <person name="Yao Z."/>
            <person name="He B."/>
            <person name="Chen R."/>
            <person name="Ma D."/>
            <person name="Qiang B."/>
            <person name="Wen Y."/>
            <person name="Hou Y."/>
            <person name="Yu J."/>
        </authorList>
    </citation>
    <scope>NUCLEOTIDE SEQUENCE [LARGE SCALE GENOMIC DNA]</scope>
    <source>
        <strain>301 / Serotype 2a</strain>
    </source>
</reference>
<reference key="2">
    <citation type="journal article" date="2003" name="Infect. Immun.">
        <title>Complete genome sequence and comparative genomics of Shigella flexneri serotype 2a strain 2457T.</title>
        <authorList>
            <person name="Wei J."/>
            <person name="Goldberg M.B."/>
            <person name="Burland V."/>
            <person name="Venkatesan M.M."/>
            <person name="Deng W."/>
            <person name="Fournier G."/>
            <person name="Mayhew G.F."/>
            <person name="Plunkett G. III"/>
            <person name="Rose D.J."/>
            <person name="Darling A."/>
            <person name="Mau B."/>
            <person name="Perna N.T."/>
            <person name="Payne S.M."/>
            <person name="Runyen-Janecky L.J."/>
            <person name="Zhou S."/>
            <person name="Schwartz D.C."/>
            <person name="Blattner F.R."/>
        </authorList>
    </citation>
    <scope>NUCLEOTIDE SEQUENCE [LARGE SCALE GENOMIC DNA]</scope>
    <source>
        <strain>ATCC 700930 / 2457T / Serotype 2a</strain>
    </source>
</reference>
<feature type="signal peptide" evidence="1">
    <location>
        <begin position="1"/>
        <end position="22"/>
    </location>
</feature>
<feature type="chain" id="PRO_0000003507" description="Vitamin B12-binding protein">
    <location>
        <begin position="23"/>
        <end position="266"/>
    </location>
</feature>
<feature type="domain" description="Fe/B12 periplasmic-binding" evidence="1">
    <location>
        <begin position="25"/>
        <end position="266"/>
    </location>
</feature>
<feature type="binding site" evidence="1">
    <location>
        <position position="50"/>
    </location>
    <ligand>
        <name>cyanocob(III)alamin</name>
        <dbReference type="ChEBI" id="CHEBI:17439"/>
    </ligand>
</feature>
<feature type="binding site" evidence="1">
    <location>
        <begin position="242"/>
        <end position="246"/>
    </location>
    <ligand>
        <name>cyanocob(III)alamin</name>
        <dbReference type="ChEBI" id="CHEBI:17439"/>
    </ligand>
</feature>
<feature type="site" description="Important for BtuC binding" evidence="1">
    <location>
        <position position="72"/>
    </location>
</feature>
<feature type="site" description="Important for BtuC binding" evidence="1">
    <location>
        <position position="202"/>
    </location>
</feature>
<feature type="disulfide bond" evidence="1">
    <location>
        <begin position="183"/>
        <end position="259"/>
    </location>
</feature>
<name>BTUF_SHIFL</name>
<keyword id="KW-1015">Disulfide bond</keyword>
<keyword id="KW-0574">Periplasm</keyword>
<keyword id="KW-1185">Reference proteome</keyword>
<keyword id="KW-0732">Signal</keyword>
<keyword id="KW-0813">Transport</keyword>
<dbReference type="EMBL" id="AE005674">
    <property type="protein sequence ID" value="AAN41813.1"/>
    <property type="molecule type" value="Genomic_DNA"/>
</dbReference>
<dbReference type="EMBL" id="AE014073">
    <property type="protein sequence ID" value="AAP15694.1"/>
    <property type="molecule type" value="Genomic_DNA"/>
</dbReference>
<dbReference type="RefSeq" id="WP_005053399.1">
    <property type="nucleotide sequence ID" value="NZ_WPGW01000006.1"/>
</dbReference>
<dbReference type="SMR" id="Q83MD7"/>
<dbReference type="STRING" id="198214.SF0150"/>
<dbReference type="PaxDb" id="198214-SF0150"/>
<dbReference type="KEGG" id="sfl:SF0150"/>
<dbReference type="KEGG" id="sfx:S0153"/>
<dbReference type="PATRIC" id="fig|198214.7.peg.168"/>
<dbReference type="HOGENOM" id="CLU_038034_2_5_6"/>
<dbReference type="Proteomes" id="UP000001006">
    <property type="component" value="Chromosome"/>
</dbReference>
<dbReference type="Proteomes" id="UP000002673">
    <property type="component" value="Chromosome"/>
</dbReference>
<dbReference type="GO" id="GO:0042597">
    <property type="term" value="C:periplasmic space"/>
    <property type="evidence" value="ECO:0007669"/>
    <property type="project" value="UniProtKB-SubCell"/>
</dbReference>
<dbReference type="GO" id="GO:0031419">
    <property type="term" value="F:cobalamin binding"/>
    <property type="evidence" value="ECO:0007669"/>
    <property type="project" value="InterPro"/>
</dbReference>
<dbReference type="GO" id="GO:0015889">
    <property type="term" value="P:cobalamin transport"/>
    <property type="evidence" value="ECO:0007669"/>
    <property type="project" value="UniProtKB-UniRule"/>
</dbReference>
<dbReference type="CDD" id="cd01144">
    <property type="entry name" value="BtuF"/>
    <property type="match status" value="1"/>
</dbReference>
<dbReference type="FunFam" id="3.40.50.1980:FF:000007">
    <property type="entry name" value="Vitamin B12-binding protein"/>
    <property type="match status" value="1"/>
</dbReference>
<dbReference type="Gene3D" id="3.40.50.1980">
    <property type="entry name" value="Nitrogenase molybdenum iron protein domain"/>
    <property type="match status" value="2"/>
</dbReference>
<dbReference type="HAMAP" id="MF_01000">
    <property type="entry name" value="BtuF"/>
    <property type="match status" value="1"/>
</dbReference>
<dbReference type="InterPro" id="IPR050902">
    <property type="entry name" value="ABC_Transporter_SBP"/>
</dbReference>
<dbReference type="InterPro" id="IPR002491">
    <property type="entry name" value="ABC_transptr_periplasmic_BD"/>
</dbReference>
<dbReference type="InterPro" id="IPR023544">
    <property type="entry name" value="ABC_transptr_vit_B12-bd"/>
</dbReference>
<dbReference type="InterPro" id="IPR054828">
    <property type="entry name" value="Vit_B12_bind_prot"/>
</dbReference>
<dbReference type="NCBIfam" id="NF002894">
    <property type="entry name" value="PRK03379.1"/>
    <property type="match status" value="1"/>
</dbReference>
<dbReference type="NCBIfam" id="NF038402">
    <property type="entry name" value="TroA_like"/>
    <property type="match status" value="1"/>
</dbReference>
<dbReference type="PANTHER" id="PTHR30535:SF34">
    <property type="entry name" value="MOLYBDATE-BINDING PROTEIN MOLA"/>
    <property type="match status" value="1"/>
</dbReference>
<dbReference type="PANTHER" id="PTHR30535">
    <property type="entry name" value="VITAMIN B12-BINDING PROTEIN"/>
    <property type="match status" value="1"/>
</dbReference>
<dbReference type="Pfam" id="PF01497">
    <property type="entry name" value="Peripla_BP_2"/>
    <property type="match status" value="1"/>
</dbReference>
<dbReference type="SUPFAM" id="SSF53807">
    <property type="entry name" value="Helical backbone' metal receptor"/>
    <property type="match status" value="1"/>
</dbReference>
<dbReference type="PROSITE" id="PS50983">
    <property type="entry name" value="FE_B12_PBP"/>
    <property type="match status" value="1"/>
</dbReference>
<evidence type="ECO:0000255" key="1">
    <source>
        <dbReference type="HAMAP-Rule" id="MF_01000"/>
    </source>
</evidence>
<gene>
    <name evidence="1" type="primary">btuF</name>
    <name type="ordered locus">SF0150</name>
    <name type="ordered locus">S0153</name>
</gene>
<comment type="function">
    <text evidence="1">Part of the ABC transporter complex BtuCDF involved in vitamin B12 import. Binds vitamin B12 and delivers it to the periplasmic surface of BtuC.</text>
</comment>
<comment type="subunit">
    <text evidence="1">The complex is composed of two ATP-binding proteins (BtuD), two transmembrane proteins (BtuC) and a solute-binding protein (BtuF).</text>
</comment>
<comment type="subcellular location">
    <subcellularLocation>
        <location evidence="1">Periplasm</location>
    </subcellularLocation>
</comment>
<comment type="similarity">
    <text evidence="1">Belongs to the BtuF family.</text>
</comment>